<gene>
    <name type="primary">insE6</name>
    <name type="synonym">yaaA</name>
    <name type="ordered locus">ECOK12F001</name>
</gene>
<reference key="1">
    <citation type="submission" date="2000-04" db="EMBL/GenBank/DDBJ databases">
        <title>Complete nucleotide sequence of the F plasmid: its implications for organization and diversification of plasmid genomes.</title>
        <authorList>
            <person name="Shimizu H."/>
            <person name="Saitoh Y."/>
            <person name="Suda Y."/>
            <person name="Uehara K."/>
            <person name="Sampei G."/>
            <person name="Mizobuchi K."/>
        </authorList>
    </citation>
    <scope>NUCLEOTIDE SEQUENCE [LARGE SCALE GENOMIC DNA]</scope>
    <source>
        <strain>K12 / CR63</strain>
        <plasmid>F</plasmid>
    </source>
</reference>
<evidence type="ECO:0000256" key="1">
    <source>
        <dbReference type="SAM" id="MobiDB-lite"/>
    </source>
</evidence>
<evidence type="ECO:0000305" key="2"/>
<sequence length="99" mass="11543">MTKTVSTSKKPRKQHSPEFRSEALKLAERIGVTAAARELSLYESQLYNWRSKQQNQQTSSERELEMSTEIARLKRQLAERDEELAILQKAATYFAKRLK</sequence>
<organism>
    <name type="scientific">Escherichia coli (strain K12)</name>
    <dbReference type="NCBI Taxonomy" id="83333"/>
    <lineage>
        <taxon>Bacteria</taxon>
        <taxon>Pseudomonadati</taxon>
        <taxon>Pseudomonadota</taxon>
        <taxon>Gammaproteobacteria</taxon>
        <taxon>Enterobacterales</taxon>
        <taxon>Enterobacteriaceae</taxon>
        <taxon>Escherichia</taxon>
    </lineage>
</organism>
<geneLocation type="plasmid">
    <name>F</name>
</geneLocation>
<feature type="chain" id="PRO_0000393747" description="Transposase InsE for insertion sequence IS3fA">
    <location>
        <begin position="1"/>
        <end position="99"/>
    </location>
</feature>
<feature type="region of interest" description="Disordered" evidence="1">
    <location>
        <begin position="1"/>
        <end position="21"/>
    </location>
</feature>
<proteinExistence type="inferred from homology"/>
<keyword id="KW-0233">DNA recombination</keyword>
<keyword id="KW-0238">DNA-binding</keyword>
<keyword id="KW-0614">Plasmid</keyword>
<keyword id="KW-0814">Transposable element</keyword>
<keyword id="KW-0815">Transposition</keyword>
<accession>P0CF71</accession>
<accession>P0ADH3</accession>
<accession>P77681</accession>
<accession>Q2MCC3</accession>
<accession>Q9S136</accession>
<name>INSE6_ECOLI</name>
<protein>
    <recommendedName>
        <fullName>Transposase InsE for insertion sequence IS3fA</fullName>
    </recommendedName>
</protein>
<comment type="function">
    <text>Involved in the transposition of the insertion sequence IS3.</text>
</comment>
<comment type="similarity">
    <text evidence="2">Belongs to the transposase 8 family.</text>
</comment>
<dbReference type="EMBL" id="AP001918">
    <property type="protein sequence ID" value="BAA97871.1"/>
    <property type="molecule type" value="Genomic_DNA"/>
</dbReference>
<dbReference type="RefSeq" id="NP_061380.1">
    <property type="nucleotide sequence ID" value="NC_002483.1"/>
</dbReference>
<dbReference type="RefSeq" id="NP_061395.1">
    <property type="nucleotide sequence ID" value="NC_002483.1"/>
</dbReference>
<dbReference type="SMR" id="P0CF71"/>
<dbReference type="KEGG" id="ecoc:C3026_01465"/>
<dbReference type="KEGG" id="ecoc:C3026_02655"/>
<dbReference type="KEGG" id="ecoc:C3026_06255"/>
<dbReference type="KEGG" id="ecoc:C3026_11725"/>
<dbReference type="KEGG" id="ecoc:C3026_24095"/>
<dbReference type="KEGG" id="ecoc:C3026_24185"/>
<dbReference type="KEGG" id="ecoc:C3026_24640"/>
<dbReference type="OMA" id="LHESQIY"/>
<dbReference type="PhylomeDB" id="P0CF71"/>
<dbReference type="PRO" id="PR:P0CF71"/>
<dbReference type="GO" id="GO:0003677">
    <property type="term" value="F:DNA binding"/>
    <property type="evidence" value="ECO:0007669"/>
    <property type="project" value="UniProtKB-KW"/>
</dbReference>
<dbReference type="GO" id="GO:0004803">
    <property type="term" value="F:transposase activity"/>
    <property type="evidence" value="ECO:0007669"/>
    <property type="project" value="InterPro"/>
</dbReference>
<dbReference type="GO" id="GO:0006313">
    <property type="term" value="P:DNA transposition"/>
    <property type="evidence" value="ECO:0007669"/>
    <property type="project" value="InterPro"/>
</dbReference>
<dbReference type="InterPro" id="IPR009057">
    <property type="entry name" value="Homeodomain-like_sf"/>
</dbReference>
<dbReference type="InterPro" id="IPR051839">
    <property type="entry name" value="RD_transcriptional_regulator"/>
</dbReference>
<dbReference type="InterPro" id="IPR002514">
    <property type="entry name" value="Transposase_8"/>
</dbReference>
<dbReference type="PANTHER" id="PTHR33215">
    <property type="entry name" value="PROTEIN DISTAL ANTENNA"/>
    <property type="match status" value="1"/>
</dbReference>
<dbReference type="PANTHER" id="PTHR33215:SF6">
    <property type="entry name" value="TRANSPOSASE INSE FOR INSERTION SEQUENCE IS3A-RELATED"/>
    <property type="match status" value="1"/>
</dbReference>
<dbReference type="Pfam" id="PF01527">
    <property type="entry name" value="HTH_Tnp_1"/>
    <property type="match status" value="1"/>
</dbReference>
<dbReference type="SUPFAM" id="SSF46689">
    <property type="entry name" value="Homeodomain-like"/>
    <property type="match status" value="1"/>
</dbReference>